<organism>
    <name type="scientific">Mustela itatsi</name>
    <name type="common">Japanese weasel</name>
    <dbReference type="NCBI Taxonomy" id="36238"/>
    <lineage>
        <taxon>Eukaryota</taxon>
        <taxon>Metazoa</taxon>
        <taxon>Chordata</taxon>
        <taxon>Craniata</taxon>
        <taxon>Vertebrata</taxon>
        <taxon>Euteleostomi</taxon>
        <taxon>Mammalia</taxon>
        <taxon>Eutheria</taxon>
        <taxon>Laurasiatheria</taxon>
        <taxon>Carnivora</taxon>
        <taxon>Caniformia</taxon>
        <taxon>Musteloidea</taxon>
        <taxon>Mustelidae</taxon>
        <taxon>Mustelinae</taxon>
        <taxon>Mustela</taxon>
    </lineage>
</organism>
<proteinExistence type="inferred from homology"/>
<gene>
    <name type="primary">MT-CYB</name>
    <name type="synonym">COB</name>
    <name type="synonym">CYTB</name>
    <name type="synonym">MTCYB</name>
</gene>
<evidence type="ECO:0000250" key="1"/>
<evidence type="ECO:0000250" key="2">
    <source>
        <dbReference type="UniProtKB" id="P00157"/>
    </source>
</evidence>
<evidence type="ECO:0000255" key="3">
    <source>
        <dbReference type="PROSITE-ProRule" id="PRU00967"/>
    </source>
</evidence>
<evidence type="ECO:0000255" key="4">
    <source>
        <dbReference type="PROSITE-ProRule" id="PRU00968"/>
    </source>
</evidence>
<keyword id="KW-0249">Electron transport</keyword>
<keyword id="KW-0349">Heme</keyword>
<keyword id="KW-0408">Iron</keyword>
<keyword id="KW-0472">Membrane</keyword>
<keyword id="KW-0479">Metal-binding</keyword>
<keyword id="KW-0496">Mitochondrion</keyword>
<keyword id="KW-0999">Mitochondrion inner membrane</keyword>
<keyword id="KW-0679">Respiratory chain</keyword>
<keyword id="KW-0812">Transmembrane</keyword>
<keyword id="KW-1133">Transmembrane helix</keyword>
<keyword id="KW-0813">Transport</keyword>
<keyword id="KW-0830">Ubiquinone</keyword>
<accession>Q9MJA2</accession>
<geneLocation type="mitochondrion"/>
<feature type="chain" id="PRO_0000254716" description="Cytochrome b">
    <location>
        <begin position="1"/>
        <end position="379"/>
    </location>
</feature>
<feature type="transmembrane region" description="Helical" evidence="2">
    <location>
        <begin position="33"/>
        <end position="53"/>
    </location>
</feature>
<feature type="transmembrane region" description="Helical" evidence="2">
    <location>
        <begin position="77"/>
        <end position="98"/>
    </location>
</feature>
<feature type="transmembrane region" description="Helical" evidence="2">
    <location>
        <begin position="113"/>
        <end position="133"/>
    </location>
</feature>
<feature type="transmembrane region" description="Helical" evidence="2">
    <location>
        <begin position="178"/>
        <end position="198"/>
    </location>
</feature>
<feature type="transmembrane region" description="Helical" evidence="2">
    <location>
        <begin position="226"/>
        <end position="246"/>
    </location>
</feature>
<feature type="transmembrane region" description="Helical" evidence="2">
    <location>
        <begin position="288"/>
        <end position="308"/>
    </location>
</feature>
<feature type="transmembrane region" description="Helical" evidence="2">
    <location>
        <begin position="320"/>
        <end position="340"/>
    </location>
</feature>
<feature type="transmembrane region" description="Helical" evidence="2">
    <location>
        <begin position="347"/>
        <end position="367"/>
    </location>
</feature>
<feature type="binding site" description="axial binding residue" evidence="2">
    <location>
        <position position="83"/>
    </location>
    <ligand>
        <name>heme b</name>
        <dbReference type="ChEBI" id="CHEBI:60344"/>
        <label>b562</label>
    </ligand>
    <ligandPart>
        <name>Fe</name>
        <dbReference type="ChEBI" id="CHEBI:18248"/>
    </ligandPart>
</feature>
<feature type="binding site" description="axial binding residue" evidence="2">
    <location>
        <position position="97"/>
    </location>
    <ligand>
        <name>heme b</name>
        <dbReference type="ChEBI" id="CHEBI:60344"/>
        <label>b566</label>
    </ligand>
    <ligandPart>
        <name>Fe</name>
        <dbReference type="ChEBI" id="CHEBI:18248"/>
    </ligandPart>
</feature>
<feature type="binding site" description="axial binding residue" evidence="2">
    <location>
        <position position="182"/>
    </location>
    <ligand>
        <name>heme b</name>
        <dbReference type="ChEBI" id="CHEBI:60344"/>
        <label>b562</label>
    </ligand>
    <ligandPart>
        <name>Fe</name>
        <dbReference type="ChEBI" id="CHEBI:18248"/>
    </ligandPart>
</feature>
<feature type="binding site" description="axial binding residue" evidence="2">
    <location>
        <position position="196"/>
    </location>
    <ligand>
        <name>heme b</name>
        <dbReference type="ChEBI" id="CHEBI:60344"/>
        <label>b566</label>
    </ligand>
    <ligandPart>
        <name>Fe</name>
        <dbReference type="ChEBI" id="CHEBI:18248"/>
    </ligandPart>
</feature>
<feature type="binding site" evidence="2">
    <location>
        <position position="201"/>
    </location>
    <ligand>
        <name>a ubiquinone</name>
        <dbReference type="ChEBI" id="CHEBI:16389"/>
    </ligand>
</feature>
<dbReference type="EMBL" id="AB026104">
    <property type="protein sequence ID" value="BAB08028.1"/>
    <property type="molecule type" value="Genomic_DNA"/>
</dbReference>
<dbReference type="SMR" id="Q9MJA2"/>
<dbReference type="GO" id="GO:0005743">
    <property type="term" value="C:mitochondrial inner membrane"/>
    <property type="evidence" value="ECO:0007669"/>
    <property type="project" value="UniProtKB-SubCell"/>
</dbReference>
<dbReference type="GO" id="GO:0045275">
    <property type="term" value="C:respiratory chain complex III"/>
    <property type="evidence" value="ECO:0007669"/>
    <property type="project" value="InterPro"/>
</dbReference>
<dbReference type="GO" id="GO:0046872">
    <property type="term" value="F:metal ion binding"/>
    <property type="evidence" value="ECO:0007669"/>
    <property type="project" value="UniProtKB-KW"/>
</dbReference>
<dbReference type="GO" id="GO:0008121">
    <property type="term" value="F:ubiquinol-cytochrome-c reductase activity"/>
    <property type="evidence" value="ECO:0007669"/>
    <property type="project" value="InterPro"/>
</dbReference>
<dbReference type="GO" id="GO:0006122">
    <property type="term" value="P:mitochondrial electron transport, ubiquinol to cytochrome c"/>
    <property type="evidence" value="ECO:0007669"/>
    <property type="project" value="TreeGrafter"/>
</dbReference>
<dbReference type="CDD" id="cd00290">
    <property type="entry name" value="cytochrome_b_C"/>
    <property type="match status" value="1"/>
</dbReference>
<dbReference type="CDD" id="cd00284">
    <property type="entry name" value="Cytochrome_b_N"/>
    <property type="match status" value="1"/>
</dbReference>
<dbReference type="FunFam" id="1.20.810.10:FF:000002">
    <property type="entry name" value="Cytochrome b"/>
    <property type="match status" value="1"/>
</dbReference>
<dbReference type="Gene3D" id="1.20.810.10">
    <property type="entry name" value="Cytochrome Bc1 Complex, Chain C"/>
    <property type="match status" value="1"/>
</dbReference>
<dbReference type="InterPro" id="IPR005798">
    <property type="entry name" value="Cyt_b/b6_C"/>
</dbReference>
<dbReference type="InterPro" id="IPR036150">
    <property type="entry name" value="Cyt_b/b6_C_sf"/>
</dbReference>
<dbReference type="InterPro" id="IPR005797">
    <property type="entry name" value="Cyt_b/b6_N"/>
</dbReference>
<dbReference type="InterPro" id="IPR027387">
    <property type="entry name" value="Cytb/b6-like_sf"/>
</dbReference>
<dbReference type="InterPro" id="IPR030689">
    <property type="entry name" value="Cytochrome_b"/>
</dbReference>
<dbReference type="InterPro" id="IPR048260">
    <property type="entry name" value="Cytochrome_b_C_euk/bac"/>
</dbReference>
<dbReference type="InterPro" id="IPR048259">
    <property type="entry name" value="Cytochrome_b_N_euk/bac"/>
</dbReference>
<dbReference type="InterPro" id="IPR016174">
    <property type="entry name" value="Di-haem_cyt_TM"/>
</dbReference>
<dbReference type="PANTHER" id="PTHR19271">
    <property type="entry name" value="CYTOCHROME B"/>
    <property type="match status" value="1"/>
</dbReference>
<dbReference type="PANTHER" id="PTHR19271:SF16">
    <property type="entry name" value="CYTOCHROME B"/>
    <property type="match status" value="1"/>
</dbReference>
<dbReference type="Pfam" id="PF00032">
    <property type="entry name" value="Cytochrom_B_C"/>
    <property type="match status" value="1"/>
</dbReference>
<dbReference type="Pfam" id="PF00033">
    <property type="entry name" value="Cytochrome_B"/>
    <property type="match status" value="1"/>
</dbReference>
<dbReference type="PIRSF" id="PIRSF038885">
    <property type="entry name" value="COB"/>
    <property type="match status" value="1"/>
</dbReference>
<dbReference type="SUPFAM" id="SSF81648">
    <property type="entry name" value="a domain/subunit of cytochrome bc1 complex (Ubiquinol-cytochrome c reductase)"/>
    <property type="match status" value="1"/>
</dbReference>
<dbReference type="SUPFAM" id="SSF81342">
    <property type="entry name" value="Transmembrane di-heme cytochromes"/>
    <property type="match status" value="1"/>
</dbReference>
<dbReference type="PROSITE" id="PS51003">
    <property type="entry name" value="CYTB_CTER"/>
    <property type="match status" value="1"/>
</dbReference>
<dbReference type="PROSITE" id="PS51002">
    <property type="entry name" value="CYTB_NTER"/>
    <property type="match status" value="1"/>
</dbReference>
<reference key="1">
    <citation type="journal article" date="2000" name="Zool. Sci.">
        <title>Intrageneric diversity of the cytochrome b gene and phylogeny of Eurasion species of the genus mustela (Mustelidae, Carnivora).</title>
        <authorList>
            <person name="Kurose N."/>
            <person name="Abramov A.V."/>
            <person name="Masuda R."/>
        </authorList>
    </citation>
    <scope>NUCLEOTIDE SEQUENCE [GENOMIC DNA]</scope>
    <source>
        <strain>Isolate MIT-MR1</strain>
    </source>
</reference>
<sequence>MTNIRKTHPLTKIINNSFIDLPAPSNISAWWNFGSLLGICLIIQILTGLFLAMHYTSDTATAFSSVTHICRDVNYGWIIRYMHANGASMFFICLFLHVGRGLYYGSYMFTETWNIGIILLFAVMATAFMGYVLPWGQMSFWGATVITNLLSAIPYIGTNLVEWIWGGFSVDKATLTRFFAFHFILPFIISALAAVHLLFLHETGSNNPSGIPSDSDKIPFHPYYTIKDILGALLLILMLMLLVLFTPDLLGDPDNYIPANPLNTPPHIKPEWYFLFAYAILRSIPNKLGGVLALILSILVLAIIPLLHTSKQRSMMFRPLSQCLFWLLVADLLTLTWIGGQPVEHPFIIIGQLASILYFMILLVLMPIISIIENNMLKW</sequence>
<comment type="function">
    <text evidence="2">Component of the ubiquinol-cytochrome c reductase complex (complex III or cytochrome b-c1 complex) that is part of the mitochondrial respiratory chain. The b-c1 complex mediates electron transfer from ubiquinol to cytochrome c. Contributes to the generation of a proton gradient across the mitochondrial membrane that is then used for ATP synthesis.</text>
</comment>
<comment type="cofactor">
    <cofactor evidence="2">
        <name>heme b</name>
        <dbReference type="ChEBI" id="CHEBI:60344"/>
    </cofactor>
    <text evidence="2">Binds 2 heme b groups non-covalently.</text>
</comment>
<comment type="subunit">
    <text evidence="2">The cytochrome bc1 complex contains 11 subunits: 3 respiratory subunits (MT-CYB, CYC1 and UQCRFS1), 2 core proteins (UQCRC1 and UQCRC2) and 6 low-molecular weight proteins (UQCRH/QCR6, UQCRB/QCR7, UQCRQ/QCR8, UQCR10/QCR9, UQCR11/QCR10 and a cleavage product of UQCRFS1). This cytochrome bc1 complex then forms a dimer.</text>
</comment>
<comment type="subcellular location">
    <subcellularLocation>
        <location evidence="2">Mitochondrion inner membrane</location>
        <topology evidence="2">Multi-pass membrane protein</topology>
    </subcellularLocation>
</comment>
<comment type="miscellaneous">
    <text evidence="1">Heme 1 (or BL or b562) is low-potential and absorbs at about 562 nm, and heme 2 (or BH or b566) is high-potential and absorbs at about 566 nm.</text>
</comment>
<comment type="similarity">
    <text evidence="3 4">Belongs to the cytochrome b family.</text>
</comment>
<comment type="caution">
    <text evidence="2">The full-length protein contains only eight transmembrane helices, not nine as predicted by bioinformatics tools.</text>
</comment>
<protein>
    <recommendedName>
        <fullName>Cytochrome b</fullName>
    </recommendedName>
    <alternativeName>
        <fullName>Complex III subunit 3</fullName>
    </alternativeName>
    <alternativeName>
        <fullName>Complex III subunit III</fullName>
    </alternativeName>
    <alternativeName>
        <fullName>Cytochrome b-c1 complex subunit 3</fullName>
    </alternativeName>
    <alternativeName>
        <fullName>Ubiquinol-cytochrome-c reductase complex cytochrome b subunit</fullName>
    </alternativeName>
</protein>
<name>CYB_MUSIT</name>